<sequence>MLEHFCECYFDLSGLILCPVLGSIILLFIPNSSIRLIRLIGLCVSLITFLYSLVLWIQFDPSTAKFQFVESLRWLPYENIHLYMGIDGLSLFFVILTTFLIPICILVGWSGMRSFGKEYIIAFLICEFLMIAVFCMLDLLLFYVFFESVLIPMFIIIGVWGSRQRKIKAAYQFFLYTLLGSVFMLLAILLILLQTGTTDLQILLTTEFSERRQILLWIAFFASFAVKVPMVPVHIWLPEAHVEAPTAGSVILAGILLKLGTYGFLRFSIPMFPEATLCFTPFIYTLSAIAIIYTSLTTLRQIDLKKIIAYSSVAHMNLVTIGMFSLNIQGIGGSILLMLSHGLVSSALFLCVGVLYDRHKTRLVRYYGGLVSTMPNFSTIFFFFTLANMSLPGTSSFIGEFLILVGAFQRNSLVATLRALGMILGAAYSLWLYNRVVSGNLKPDFLYKFSDLNGREVFIFLPFLVGVVWMGVYPKVFLDCMHTSVSNLVQHGKFH</sequence>
<reference key="1">
    <citation type="journal article" date="1991" name="Nucleic Acids Res.">
        <title>RNA editing of the transcript coding for subunit 4 of NADH dehydrogenase in wheat mitochondria: uneven distribution of the editing sites among the four exons.</title>
        <authorList>
            <person name="Lamattina L."/>
            <person name="Grienenberger J.-M."/>
        </authorList>
    </citation>
    <scope>NUCLEOTIDE SEQUENCE [GENOMIC DNA / MRNA]</scope>
    <scope>RNA EDITING</scope>
    <source>
        <strain>cv. Capitole</strain>
        <tissue>Etiolated seedling</tissue>
    </source>
</reference>
<reference key="2">
    <citation type="journal article" date="1989" name="FEBS Lett.">
        <title>RNA editing at a splicing site of NADH dehydrogenase subunit IV gene transcript in wheat mitochondria.</title>
        <authorList>
            <person name="Lamattina L."/>
            <person name="Weil J.H."/>
            <person name="Grienenberger J.M."/>
        </authorList>
    </citation>
    <scope>NUCLEOTIDE SEQUENCE [GENOMIC DNA / MRNA] OF 295-346</scope>
    <scope>RNA EDITING</scope>
</reference>
<name>NU4M_WHEAT</name>
<gene>
    <name type="primary">ND4</name>
    <name type="synonym">NAD4</name>
</gene>
<dbReference type="EC" id="7.1.1.2"/>
<dbReference type="EMBL" id="X57163">
    <property type="protein sequence ID" value="CAA40452.1"/>
    <property type="status" value="ALT_SEQ"/>
    <property type="molecule type" value="mRNA"/>
</dbReference>
<dbReference type="EMBL" id="X57164">
    <property type="protein sequence ID" value="CAA40453.1"/>
    <property type="status" value="ALT_SEQ"/>
    <property type="molecule type" value="Genomic_DNA"/>
</dbReference>
<dbReference type="PIR" id="S16447">
    <property type="entry name" value="S16447"/>
</dbReference>
<dbReference type="SMR" id="P27572"/>
<dbReference type="PaxDb" id="4565-EPlTAEP00000010093"/>
<dbReference type="eggNOG" id="KOG4845">
    <property type="taxonomic scope" value="Eukaryota"/>
</dbReference>
<dbReference type="Proteomes" id="UP000019116">
    <property type="component" value="Unplaced"/>
</dbReference>
<dbReference type="ExpressionAtlas" id="P27572">
    <property type="expression patterns" value="baseline"/>
</dbReference>
<dbReference type="GO" id="GO:0031966">
    <property type="term" value="C:mitochondrial membrane"/>
    <property type="evidence" value="ECO:0007669"/>
    <property type="project" value="UniProtKB-SubCell"/>
</dbReference>
<dbReference type="GO" id="GO:0009536">
    <property type="term" value="C:plastid"/>
    <property type="evidence" value="ECO:0007669"/>
    <property type="project" value="UniProtKB-ARBA"/>
</dbReference>
<dbReference type="GO" id="GO:0008137">
    <property type="term" value="F:NADH dehydrogenase (ubiquinone) activity"/>
    <property type="evidence" value="ECO:0007669"/>
    <property type="project" value="UniProtKB-EC"/>
</dbReference>
<dbReference type="GO" id="GO:0042773">
    <property type="term" value="P:ATP synthesis coupled electron transport"/>
    <property type="evidence" value="ECO:0007669"/>
    <property type="project" value="InterPro"/>
</dbReference>
<dbReference type="InterPro" id="IPR010227">
    <property type="entry name" value="NADH_Q_OxRdtase_chainM/4"/>
</dbReference>
<dbReference type="InterPro" id="IPR003918">
    <property type="entry name" value="NADH_UbQ_OxRdtase"/>
</dbReference>
<dbReference type="InterPro" id="IPR001750">
    <property type="entry name" value="ND/Mrp_TM"/>
</dbReference>
<dbReference type="NCBIfam" id="TIGR01972">
    <property type="entry name" value="NDH_I_M"/>
    <property type="match status" value="1"/>
</dbReference>
<dbReference type="NCBIfam" id="NF004499">
    <property type="entry name" value="PRK05846.1-3"/>
    <property type="match status" value="1"/>
</dbReference>
<dbReference type="PANTHER" id="PTHR43507">
    <property type="entry name" value="NADH-UBIQUINONE OXIDOREDUCTASE CHAIN 4"/>
    <property type="match status" value="1"/>
</dbReference>
<dbReference type="PANTHER" id="PTHR43507:SF1">
    <property type="entry name" value="NADH-UBIQUINONE OXIDOREDUCTASE CHAIN 4"/>
    <property type="match status" value="1"/>
</dbReference>
<dbReference type="Pfam" id="PF00361">
    <property type="entry name" value="Proton_antipo_M"/>
    <property type="match status" value="1"/>
</dbReference>
<dbReference type="PRINTS" id="PR01437">
    <property type="entry name" value="NUOXDRDTASE4"/>
</dbReference>
<geneLocation type="mitochondrion"/>
<keyword id="KW-0249">Electron transport</keyword>
<keyword id="KW-0472">Membrane</keyword>
<keyword id="KW-0496">Mitochondrion</keyword>
<keyword id="KW-0520">NAD</keyword>
<keyword id="KW-1185">Reference proteome</keyword>
<keyword id="KW-0679">Respiratory chain</keyword>
<keyword id="KW-0691">RNA editing</keyword>
<keyword id="KW-1278">Translocase</keyword>
<keyword id="KW-0812">Transmembrane</keyword>
<keyword id="KW-1133">Transmembrane helix</keyword>
<keyword id="KW-0813">Transport</keyword>
<keyword id="KW-0830">Ubiquinone</keyword>
<protein>
    <recommendedName>
        <fullName>NADH-ubiquinone oxidoreductase chain 4</fullName>
        <ecNumber>7.1.1.2</ecNumber>
    </recommendedName>
    <alternativeName>
        <fullName>NADH dehydrogenase subunit 4</fullName>
    </alternativeName>
</protein>
<proteinExistence type="evidence at transcript level"/>
<accession>P27572</accession>
<comment type="function">
    <text evidence="1">Core subunit of the mitochondrial membrane respiratory chain NADH dehydrogenase (Complex I) that is believed to belong to the minimal assembly required for catalysis. Complex I functions in the transfer of electrons from NADH to the respiratory chain. The immediate electron acceptor for the enzyme is believed to be ubiquinone (By similarity).</text>
</comment>
<comment type="catalytic activity">
    <reaction>
        <text>a ubiquinone + NADH + 5 H(+)(in) = a ubiquinol + NAD(+) + 4 H(+)(out)</text>
        <dbReference type="Rhea" id="RHEA:29091"/>
        <dbReference type="Rhea" id="RHEA-COMP:9565"/>
        <dbReference type="Rhea" id="RHEA-COMP:9566"/>
        <dbReference type="ChEBI" id="CHEBI:15378"/>
        <dbReference type="ChEBI" id="CHEBI:16389"/>
        <dbReference type="ChEBI" id="CHEBI:17976"/>
        <dbReference type="ChEBI" id="CHEBI:57540"/>
        <dbReference type="ChEBI" id="CHEBI:57945"/>
        <dbReference type="EC" id="7.1.1.2"/>
    </reaction>
</comment>
<comment type="subcellular location">
    <subcellularLocation>
        <location evidence="1">Mitochondrion membrane</location>
        <topology evidence="1">Multi-pass membrane protein</topology>
    </subcellularLocation>
</comment>
<comment type="RNA editing">
    <location>
        <position position="15" evidence="3 4"/>
    </location>
    <location>
        <position position="25" evidence="3 4"/>
    </location>
    <location>
        <position position="26" evidence="3 4"/>
    </location>
    <location>
        <position position="36" evidence="3 4"/>
    </location>
    <location>
        <position position="52" evidence="3 4"/>
    </location>
    <location>
        <position position="53" evidence="3 4"/>
    </location>
    <location>
        <position position="55" evidence="3 4"/>
    </location>
    <location>
        <position position="56" evidence="3 4"/>
    </location>
    <location>
        <position position="66" evidence="3 4"/>
    </location>
    <location>
        <position position="106" evidence="3 4"/>
    </location>
    <location>
        <position position="121" evidence="3 4"/>
    </location>
    <location>
        <position position="126" evidence="3 4"/>
    </location>
    <location>
        <position position="134" evidence="3 4"/>
    </location>
    <location>
        <position position="139" evidence="3 4"/>
    </location>
    <location>
        <position position="145" evidence="3 4"/>
    </location>
    <location>
        <position position="146" evidence="3 4"/>
    </location>
    <location>
        <position position="150" evidence="3 4"/>
    </location>
    <location>
        <position position="326" evidence="3 4"/>
    </location>
    <location>
        <position position="458" evidence="3 4"/>
    </location>
    <location>
        <position position="469" evidence="3 4"/>
    </location>
    <location>
        <position position="473" evidence="3 4"/>
    </location>
    <location>
        <position position="478" evidence="3 4"/>
    </location>
</comment>
<comment type="similarity">
    <text evidence="5">Belongs to the complex I subunit 4 family.</text>
</comment>
<feature type="chain" id="PRO_0000118003" description="NADH-ubiquinone oxidoreductase chain 4">
    <location>
        <begin position="1"/>
        <end position="495"/>
    </location>
</feature>
<feature type="transmembrane region" description="Helical" evidence="2">
    <location>
        <begin position="9"/>
        <end position="29"/>
    </location>
</feature>
<feature type="transmembrane region" description="Helical" evidence="2">
    <location>
        <begin position="39"/>
        <end position="59"/>
    </location>
</feature>
<feature type="transmembrane region" description="Helical" evidence="2">
    <location>
        <begin position="89"/>
        <end position="109"/>
    </location>
</feature>
<feature type="transmembrane region" description="Helical" evidence="2">
    <location>
        <begin position="118"/>
        <end position="138"/>
    </location>
</feature>
<feature type="transmembrane region" description="Helical" evidence="2">
    <location>
        <begin position="139"/>
        <end position="159"/>
    </location>
</feature>
<feature type="transmembrane region" description="Helical" evidence="2">
    <location>
        <begin position="173"/>
        <end position="193"/>
    </location>
</feature>
<feature type="transmembrane region" description="Helical" evidence="2">
    <location>
        <begin position="214"/>
        <end position="234"/>
    </location>
</feature>
<feature type="transmembrane region" description="Helical" evidence="2">
    <location>
        <begin position="245"/>
        <end position="265"/>
    </location>
</feature>
<feature type="transmembrane region" description="Helical" evidence="2">
    <location>
        <begin position="272"/>
        <end position="292"/>
    </location>
</feature>
<feature type="transmembrane region" description="Helical" evidence="2">
    <location>
        <begin position="313"/>
        <end position="333"/>
    </location>
</feature>
<feature type="transmembrane region" description="Helical" evidence="2">
    <location>
        <begin position="335"/>
        <end position="355"/>
    </location>
</feature>
<feature type="transmembrane region" description="Helical" evidence="2">
    <location>
        <begin position="367"/>
        <end position="387"/>
    </location>
</feature>
<feature type="transmembrane region" description="Helical" evidence="2">
    <location>
        <begin position="388"/>
        <end position="408"/>
    </location>
</feature>
<feature type="transmembrane region" description="Helical" evidence="2">
    <location>
        <begin position="413"/>
        <end position="433"/>
    </location>
</feature>
<feature type="transmembrane region" description="Helical" evidence="2">
    <location>
        <begin position="457"/>
        <end position="477"/>
    </location>
</feature>
<evidence type="ECO:0000250" key="1"/>
<evidence type="ECO:0000255" key="2"/>
<evidence type="ECO:0000269" key="3">
    <source>
    </source>
</evidence>
<evidence type="ECO:0000269" key="4">
    <source>
    </source>
</evidence>
<evidence type="ECO:0000305" key="5"/>
<organism>
    <name type="scientific">Triticum aestivum</name>
    <name type="common">Wheat</name>
    <dbReference type="NCBI Taxonomy" id="4565"/>
    <lineage>
        <taxon>Eukaryota</taxon>
        <taxon>Viridiplantae</taxon>
        <taxon>Streptophyta</taxon>
        <taxon>Embryophyta</taxon>
        <taxon>Tracheophyta</taxon>
        <taxon>Spermatophyta</taxon>
        <taxon>Magnoliopsida</taxon>
        <taxon>Liliopsida</taxon>
        <taxon>Poales</taxon>
        <taxon>Poaceae</taxon>
        <taxon>BOP clade</taxon>
        <taxon>Pooideae</taxon>
        <taxon>Triticodae</taxon>
        <taxon>Triticeae</taxon>
        <taxon>Triticinae</taxon>
        <taxon>Triticum</taxon>
    </lineage>
</organism>